<gene>
    <name type="primary">Txndc8</name>
    <name type="synonym">Sptrx3</name>
</gene>
<keyword id="KW-0963">Cytoplasm</keyword>
<keyword id="KW-0217">Developmental protein</keyword>
<keyword id="KW-0221">Differentiation</keyword>
<keyword id="KW-1015">Disulfide bond</keyword>
<keyword id="KW-0333">Golgi apparatus</keyword>
<keyword id="KW-0676">Redox-active center</keyword>
<keyword id="KW-1185">Reference proteome</keyword>
<keyword id="KW-0744">Spermatogenesis</keyword>
<comment type="function">
    <text evidence="1">May be required for post-translational modifications of proteins required for acrosomal biogenesis. May act by reducing disulfide bonds within the sperm (By similarity).</text>
</comment>
<comment type="subcellular location">
    <subcellularLocation>
        <location evidence="1">Cytoplasm</location>
    </subcellularLocation>
    <subcellularLocation>
        <location evidence="1">Golgi apparatus</location>
    </subcellularLocation>
</comment>
<comment type="tissue specificity">
    <text evidence="3">Testis-specific. Expressed in spermatozoa, sperm tail, elongated and round spermatids.</text>
</comment>
<comment type="miscellaneous">
    <text>In vasectomized rats, autoantibodies against Txndc8 are present.</text>
</comment>
<comment type="similarity">
    <text evidence="4">Belongs to the thioredoxin family.</text>
</comment>
<accession>Q69AB1</accession>
<evidence type="ECO:0000250" key="1"/>
<evidence type="ECO:0000255" key="2">
    <source>
        <dbReference type="PROSITE-ProRule" id="PRU00691"/>
    </source>
</evidence>
<evidence type="ECO:0000269" key="3">
    <source>
    </source>
</evidence>
<evidence type="ECO:0000305" key="4"/>
<name>TXND8_RAT</name>
<reference key="1">
    <citation type="journal article" date="2004" name="J. Biol. Chem.">
        <title>Spermatocyte/spermatid-specific thioredoxin-3, a novel Golgi apparatus-associated thioredoxin, is a specific marker of aberrant spermatogenesis.</title>
        <authorList>
            <person name="Jimenez A."/>
            <person name="Zu W."/>
            <person name="Rawe V.Y."/>
            <person name="Pelto-Huikko M."/>
            <person name="Flickinger C.J."/>
            <person name="Sutovsky P."/>
            <person name="Gustafsson J.-A."/>
            <person name="Oko R."/>
            <person name="Miranda-Vizuete A."/>
        </authorList>
    </citation>
    <scope>NUCLEOTIDE SEQUENCE [MRNA]</scope>
    <scope>TISSUE SPECIFICITY</scope>
    <source>
        <tissue>Testis</tissue>
    </source>
</reference>
<proteinExistence type="evidence at transcript level"/>
<dbReference type="EMBL" id="AY496270">
    <property type="protein sequence ID" value="AAS77224.1"/>
    <property type="molecule type" value="mRNA"/>
</dbReference>
<dbReference type="RefSeq" id="NP_001004092.1">
    <property type="nucleotide sequence ID" value="NM_001004092.3"/>
</dbReference>
<dbReference type="SMR" id="Q69AB1"/>
<dbReference type="STRING" id="10116.ENSRNOP00000041009"/>
<dbReference type="PhosphoSitePlus" id="Q69AB1"/>
<dbReference type="PaxDb" id="10116-ENSRNOP00000041009"/>
<dbReference type="GeneID" id="362525"/>
<dbReference type="KEGG" id="rno:362525"/>
<dbReference type="UCSC" id="RGD:1303121">
    <property type="organism name" value="rat"/>
</dbReference>
<dbReference type="AGR" id="RGD:1303121"/>
<dbReference type="CTD" id="255220"/>
<dbReference type="RGD" id="1303121">
    <property type="gene designation" value="Txndc8"/>
</dbReference>
<dbReference type="VEuPathDB" id="HostDB:ENSRNOG00000029073"/>
<dbReference type="eggNOG" id="KOG0907">
    <property type="taxonomic scope" value="Eukaryota"/>
</dbReference>
<dbReference type="HOGENOM" id="CLU_090389_14_6_1"/>
<dbReference type="InParanoid" id="Q69AB1"/>
<dbReference type="OrthoDB" id="54845at9989"/>
<dbReference type="PhylomeDB" id="Q69AB1"/>
<dbReference type="TreeFam" id="TF321403"/>
<dbReference type="PRO" id="PR:Q69AB1"/>
<dbReference type="Proteomes" id="UP000002494">
    <property type="component" value="Chromosome 5"/>
</dbReference>
<dbReference type="Bgee" id="ENSRNOG00000029073">
    <property type="expression patterns" value="Expressed in testis and 1 other cell type or tissue"/>
</dbReference>
<dbReference type="GO" id="GO:0001669">
    <property type="term" value="C:acrosomal vesicle"/>
    <property type="evidence" value="ECO:0000314"/>
    <property type="project" value="RGD"/>
</dbReference>
<dbReference type="GO" id="GO:0005737">
    <property type="term" value="C:cytoplasm"/>
    <property type="evidence" value="ECO:0000266"/>
    <property type="project" value="RGD"/>
</dbReference>
<dbReference type="GO" id="GO:0005794">
    <property type="term" value="C:Golgi apparatus"/>
    <property type="evidence" value="ECO:0000266"/>
    <property type="project" value="RGD"/>
</dbReference>
<dbReference type="GO" id="GO:0036126">
    <property type="term" value="C:sperm flagellum"/>
    <property type="evidence" value="ECO:0000314"/>
    <property type="project" value="RGD"/>
</dbReference>
<dbReference type="GO" id="GO:0001675">
    <property type="term" value="P:acrosome assembly"/>
    <property type="evidence" value="ECO:0000270"/>
    <property type="project" value="RGD"/>
</dbReference>
<dbReference type="GO" id="GO:0007283">
    <property type="term" value="P:spermatogenesis"/>
    <property type="evidence" value="ECO:0000270"/>
    <property type="project" value="RGD"/>
</dbReference>
<dbReference type="CDD" id="cd02947">
    <property type="entry name" value="TRX_family"/>
    <property type="match status" value="1"/>
</dbReference>
<dbReference type="FunFam" id="3.40.30.10:FF:000262">
    <property type="entry name" value="Thioredoxin domain containing 8"/>
    <property type="match status" value="1"/>
</dbReference>
<dbReference type="Gene3D" id="3.40.30.10">
    <property type="entry name" value="Glutaredoxin"/>
    <property type="match status" value="1"/>
</dbReference>
<dbReference type="InterPro" id="IPR036249">
    <property type="entry name" value="Thioredoxin-like_sf"/>
</dbReference>
<dbReference type="InterPro" id="IPR017937">
    <property type="entry name" value="Thioredoxin_CS"/>
</dbReference>
<dbReference type="InterPro" id="IPR013766">
    <property type="entry name" value="Thioredoxin_domain"/>
</dbReference>
<dbReference type="PANTHER" id="PTHR46115">
    <property type="entry name" value="THIOREDOXIN-LIKE PROTEIN 1"/>
    <property type="match status" value="1"/>
</dbReference>
<dbReference type="Pfam" id="PF00085">
    <property type="entry name" value="Thioredoxin"/>
    <property type="match status" value="1"/>
</dbReference>
<dbReference type="PRINTS" id="PR00421">
    <property type="entry name" value="THIOREDOXIN"/>
</dbReference>
<dbReference type="SUPFAM" id="SSF52833">
    <property type="entry name" value="Thioredoxin-like"/>
    <property type="match status" value="1"/>
</dbReference>
<dbReference type="PROSITE" id="PS00194">
    <property type="entry name" value="THIOREDOXIN_1"/>
    <property type="match status" value="1"/>
</dbReference>
<dbReference type="PROSITE" id="PS51352">
    <property type="entry name" value="THIOREDOXIN_2"/>
    <property type="match status" value="1"/>
</dbReference>
<feature type="chain" id="PRO_0000120164" description="Thioredoxin domain-containing protein 8">
    <location>
        <begin position="1"/>
        <end position="127"/>
    </location>
</feature>
<feature type="domain" description="Thioredoxin" evidence="2">
    <location>
        <begin position="2"/>
        <end position="127"/>
    </location>
</feature>
<feature type="disulfide bond" description="Redox-active" evidence="2">
    <location>
        <begin position="32"/>
        <end position="35"/>
    </location>
</feature>
<protein>
    <recommendedName>
        <fullName>Thioredoxin domain-containing protein 8</fullName>
    </recommendedName>
    <alternativeName>
        <fullName>Spermatid-specific thioredoxin-3</fullName>
        <shortName>Sptrx-3</shortName>
    </alternativeName>
</protein>
<organism>
    <name type="scientific">Rattus norvegicus</name>
    <name type="common">Rat</name>
    <dbReference type="NCBI Taxonomy" id="10116"/>
    <lineage>
        <taxon>Eukaryota</taxon>
        <taxon>Metazoa</taxon>
        <taxon>Chordata</taxon>
        <taxon>Craniata</taxon>
        <taxon>Vertebrata</taxon>
        <taxon>Euteleostomi</taxon>
        <taxon>Mammalia</taxon>
        <taxon>Eutheria</taxon>
        <taxon>Euarchontoglires</taxon>
        <taxon>Glires</taxon>
        <taxon>Rodentia</taxon>
        <taxon>Myomorpha</taxon>
        <taxon>Muroidea</taxon>
        <taxon>Muridae</taxon>
        <taxon>Murinae</taxon>
        <taxon>Rattus</taxon>
    </lineage>
</organism>
<sequence>MVQKIKSMREFKELLGAAGNRLVVVEFSAQWCGPCKMIAPAFQAMSLQYRNVMFAQVDVDSSQELTEHCSIQVVPTFQMFKHSRKVTPFSRLKRILCCFRSGPGSKKIFEFQGADIEKLEEKIQELM</sequence>